<sequence length="553" mass="61711">MATVTLNYPDLVKLIGIDLSLDKVREVMFELGSETEDIQGDEVTFEVTSDRADLLSEEGIARMLRAYYSIETGFRIPKLQPSGYKLIVNREVEPVRPYVTGAIVRNVQFTDESIKSLMHLQEKLHGTFGRKRKKGAVGVHDLSKIKGREIHYRAVPGDSVKFVPLQSDELMTLSDVLARHPKGIDYRYVLEGKNLMPIITDDEGIFSFPPIINSKRTEVTLNTHDLLIELTGEDLRTIDYMLNIVLYSLDLRGASIYSIDVVYPDETLHRPDFNVRNIDIEVDYVNRVLGLELTAPDIKALLERMGFKVAETGSDYLIVEVPPYRADILHKRDVVDDVGRAFGYNNITPSYPNTPSVGKLTEATKLGDAIRNTMIGLGCQDTFNFILIGKDEVFGKMNLPDDGTAVEISNPYAEQYNIVRTSLIPSLMIVLSNNLHRDYPQNIFEVGTVAHLDSAENTGVKEIDHVACTLCYAKAGFNEIKVKLQSLCANFGKLDELKTVAAEHPSFIPGRCAEVRIGDKKVGIIGELSPVVLKSWGIEMPVAAFEMEIAALK</sequence>
<name>SYFB_METAR</name>
<keyword id="KW-0030">Aminoacyl-tRNA synthetase</keyword>
<keyword id="KW-0067">ATP-binding</keyword>
<keyword id="KW-0963">Cytoplasm</keyword>
<keyword id="KW-0436">Ligase</keyword>
<keyword id="KW-0460">Magnesium</keyword>
<keyword id="KW-0479">Metal-binding</keyword>
<keyword id="KW-0547">Nucleotide-binding</keyword>
<keyword id="KW-0648">Protein biosynthesis</keyword>
<keyword id="KW-1185">Reference proteome</keyword>
<accession>Q0W0X4</accession>
<comment type="catalytic activity">
    <reaction evidence="1">
        <text>tRNA(Phe) + L-phenylalanine + ATP = L-phenylalanyl-tRNA(Phe) + AMP + diphosphate + H(+)</text>
        <dbReference type="Rhea" id="RHEA:19413"/>
        <dbReference type="Rhea" id="RHEA-COMP:9668"/>
        <dbReference type="Rhea" id="RHEA-COMP:9699"/>
        <dbReference type="ChEBI" id="CHEBI:15378"/>
        <dbReference type="ChEBI" id="CHEBI:30616"/>
        <dbReference type="ChEBI" id="CHEBI:33019"/>
        <dbReference type="ChEBI" id="CHEBI:58095"/>
        <dbReference type="ChEBI" id="CHEBI:78442"/>
        <dbReference type="ChEBI" id="CHEBI:78531"/>
        <dbReference type="ChEBI" id="CHEBI:456215"/>
        <dbReference type="EC" id="6.1.1.20"/>
    </reaction>
</comment>
<comment type="cofactor">
    <cofactor evidence="1">
        <name>Mg(2+)</name>
        <dbReference type="ChEBI" id="CHEBI:18420"/>
    </cofactor>
</comment>
<comment type="subunit">
    <text evidence="1">Tetramer of two alpha and two beta subunits.</text>
</comment>
<comment type="subcellular location">
    <subcellularLocation>
        <location evidence="1">Cytoplasm</location>
    </subcellularLocation>
</comment>
<comment type="similarity">
    <text evidence="1">Belongs to the phenylalanyl-tRNA synthetase beta subunit family. Type 2 subfamily.</text>
</comment>
<reference key="1">
    <citation type="journal article" date="2006" name="Science">
        <title>Genome of rice cluster I archaea -- the key methane producers in the rice rhizosphere.</title>
        <authorList>
            <person name="Erkel C."/>
            <person name="Kube M."/>
            <person name="Reinhardt R."/>
            <person name="Liesack W."/>
        </authorList>
    </citation>
    <scope>NUCLEOTIDE SEQUENCE [LARGE SCALE GENOMIC DNA]</scope>
    <source>
        <strain>DSM 22066 / NBRC 105507 / MRE50</strain>
    </source>
</reference>
<organism>
    <name type="scientific">Methanocella arvoryzae (strain DSM 22066 / NBRC 105507 / MRE50)</name>
    <dbReference type="NCBI Taxonomy" id="351160"/>
    <lineage>
        <taxon>Archaea</taxon>
        <taxon>Methanobacteriati</taxon>
        <taxon>Methanobacteriota</taxon>
        <taxon>Stenosarchaea group</taxon>
        <taxon>Methanomicrobia</taxon>
        <taxon>Methanocellales</taxon>
        <taxon>Methanocellaceae</taxon>
        <taxon>Methanocella</taxon>
    </lineage>
</organism>
<evidence type="ECO:0000255" key="1">
    <source>
        <dbReference type="HAMAP-Rule" id="MF_00284"/>
    </source>
</evidence>
<protein>
    <recommendedName>
        <fullName evidence="1">Phenylalanine--tRNA ligase beta subunit</fullName>
        <ecNumber evidence="1">6.1.1.20</ecNumber>
    </recommendedName>
    <alternativeName>
        <fullName evidence="1">Phenylalanyl-tRNA synthetase beta subunit</fullName>
        <shortName evidence="1">PheRS</shortName>
    </alternativeName>
</protein>
<gene>
    <name evidence="1" type="primary">pheT</name>
    <name type="ordered locus">UNCMA_02960</name>
    <name type="ORF">RRC225</name>
</gene>
<dbReference type="EC" id="6.1.1.20" evidence="1"/>
<dbReference type="EMBL" id="AM114193">
    <property type="protein sequence ID" value="CAJ37969.1"/>
    <property type="molecule type" value="Genomic_DNA"/>
</dbReference>
<dbReference type="RefSeq" id="WP_012034625.1">
    <property type="nucleotide sequence ID" value="NC_009464.1"/>
</dbReference>
<dbReference type="SMR" id="Q0W0X4"/>
<dbReference type="STRING" id="351160.RRC225"/>
<dbReference type="GeneID" id="5143727"/>
<dbReference type="KEGG" id="rci:RRC225"/>
<dbReference type="PATRIC" id="fig|351160.9.peg.312"/>
<dbReference type="eggNOG" id="arCOG00412">
    <property type="taxonomic scope" value="Archaea"/>
</dbReference>
<dbReference type="OrthoDB" id="10073at2157"/>
<dbReference type="Proteomes" id="UP000000663">
    <property type="component" value="Chromosome"/>
</dbReference>
<dbReference type="GO" id="GO:0009328">
    <property type="term" value="C:phenylalanine-tRNA ligase complex"/>
    <property type="evidence" value="ECO:0007669"/>
    <property type="project" value="TreeGrafter"/>
</dbReference>
<dbReference type="GO" id="GO:0005524">
    <property type="term" value="F:ATP binding"/>
    <property type="evidence" value="ECO:0007669"/>
    <property type="project" value="UniProtKB-UniRule"/>
</dbReference>
<dbReference type="GO" id="GO:0000287">
    <property type="term" value="F:magnesium ion binding"/>
    <property type="evidence" value="ECO:0007669"/>
    <property type="project" value="InterPro"/>
</dbReference>
<dbReference type="GO" id="GO:0004826">
    <property type="term" value="F:phenylalanine-tRNA ligase activity"/>
    <property type="evidence" value="ECO:0007669"/>
    <property type="project" value="UniProtKB-UniRule"/>
</dbReference>
<dbReference type="GO" id="GO:0003723">
    <property type="term" value="F:RNA binding"/>
    <property type="evidence" value="ECO:0007669"/>
    <property type="project" value="InterPro"/>
</dbReference>
<dbReference type="GO" id="GO:0006432">
    <property type="term" value="P:phenylalanyl-tRNA aminoacylation"/>
    <property type="evidence" value="ECO:0007669"/>
    <property type="project" value="UniProtKB-UniRule"/>
</dbReference>
<dbReference type="CDD" id="cd00769">
    <property type="entry name" value="PheRS_beta_core"/>
    <property type="match status" value="1"/>
</dbReference>
<dbReference type="FunFam" id="3.50.40.10:FF:000003">
    <property type="entry name" value="Phenylalanine--tRNA ligase beta subunit"/>
    <property type="match status" value="1"/>
</dbReference>
<dbReference type="Gene3D" id="3.30.56.10">
    <property type="match status" value="2"/>
</dbReference>
<dbReference type="Gene3D" id="3.30.930.10">
    <property type="entry name" value="Bira Bifunctional Protein, Domain 2"/>
    <property type="match status" value="1"/>
</dbReference>
<dbReference type="Gene3D" id="3.50.40.10">
    <property type="entry name" value="Phenylalanyl-trna Synthetase, Chain B, domain 3"/>
    <property type="match status" value="1"/>
</dbReference>
<dbReference type="HAMAP" id="MF_00284">
    <property type="entry name" value="Phe_tRNA_synth_beta2"/>
    <property type="match status" value="1"/>
</dbReference>
<dbReference type="InterPro" id="IPR045864">
    <property type="entry name" value="aa-tRNA-synth_II/BPL/LPL"/>
</dbReference>
<dbReference type="InterPro" id="IPR005146">
    <property type="entry name" value="B3/B4_tRNA-bd"/>
</dbReference>
<dbReference type="InterPro" id="IPR009061">
    <property type="entry name" value="DNA-bd_dom_put_sf"/>
</dbReference>
<dbReference type="InterPro" id="IPR045060">
    <property type="entry name" value="Phe-tRNA-ligase_IIc_bsu"/>
</dbReference>
<dbReference type="InterPro" id="IPR004531">
    <property type="entry name" value="Phe-tRNA-synth_IIc_bsu_arc_euk"/>
</dbReference>
<dbReference type="InterPro" id="IPR020825">
    <property type="entry name" value="Phe-tRNA_synthase-like_B3/B4"/>
</dbReference>
<dbReference type="InterPro" id="IPR022918">
    <property type="entry name" value="Phe_tRNA_ligase_beta2_arc"/>
</dbReference>
<dbReference type="InterPro" id="IPR041616">
    <property type="entry name" value="PheRS_beta_core"/>
</dbReference>
<dbReference type="InterPro" id="IPR005147">
    <property type="entry name" value="tRNA_synthase_B5-dom"/>
</dbReference>
<dbReference type="NCBIfam" id="TIGR00471">
    <property type="entry name" value="pheT_arch"/>
    <property type="match status" value="1"/>
</dbReference>
<dbReference type="PANTHER" id="PTHR10947:SF0">
    <property type="entry name" value="PHENYLALANINE--TRNA LIGASE BETA SUBUNIT"/>
    <property type="match status" value="1"/>
</dbReference>
<dbReference type="PANTHER" id="PTHR10947">
    <property type="entry name" value="PHENYLALANYL-TRNA SYNTHETASE BETA CHAIN AND LEUCINE-RICH REPEAT-CONTAINING PROTEIN 47"/>
    <property type="match status" value="1"/>
</dbReference>
<dbReference type="Pfam" id="PF03483">
    <property type="entry name" value="B3_4"/>
    <property type="match status" value="1"/>
</dbReference>
<dbReference type="Pfam" id="PF03484">
    <property type="entry name" value="B5"/>
    <property type="match status" value="1"/>
</dbReference>
<dbReference type="Pfam" id="PF17759">
    <property type="entry name" value="tRNA_synthFbeta"/>
    <property type="match status" value="1"/>
</dbReference>
<dbReference type="SMART" id="SM00873">
    <property type="entry name" value="B3_4"/>
    <property type="match status" value="1"/>
</dbReference>
<dbReference type="SMART" id="SM00874">
    <property type="entry name" value="B5"/>
    <property type="match status" value="1"/>
</dbReference>
<dbReference type="SUPFAM" id="SSF55681">
    <property type="entry name" value="Class II aaRS and biotin synthetases"/>
    <property type="match status" value="1"/>
</dbReference>
<dbReference type="SUPFAM" id="SSF56037">
    <property type="entry name" value="PheT/TilS domain"/>
    <property type="match status" value="1"/>
</dbReference>
<dbReference type="SUPFAM" id="SSF46955">
    <property type="entry name" value="Putative DNA-binding domain"/>
    <property type="match status" value="2"/>
</dbReference>
<dbReference type="PROSITE" id="PS51483">
    <property type="entry name" value="B5"/>
    <property type="match status" value="1"/>
</dbReference>
<proteinExistence type="inferred from homology"/>
<feature type="chain" id="PRO_1000022431" description="Phenylalanine--tRNA ligase beta subunit">
    <location>
        <begin position="1"/>
        <end position="553"/>
    </location>
</feature>
<feature type="domain" description="B5" evidence="1">
    <location>
        <begin position="273"/>
        <end position="349"/>
    </location>
</feature>
<feature type="binding site" evidence="1">
    <location>
        <position position="327"/>
    </location>
    <ligand>
        <name>Mg(2+)</name>
        <dbReference type="ChEBI" id="CHEBI:18420"/>
        <note>shared with alpha subunit</note>
    </ligand>
</feature>
<feature type="binding site" evidence="1">
    <location>
        <position position="333"/>
    </location>
    <ligand>
        <name>Mg(2+)</name>
        <dbReference type="ChEBI" id="CHEBI:18420"/>
        <note>shared with alpha subunit</note>
    </ligand>
</feature>
<feature type="binding site" evidence="1">
    <location>
        <position position="336"/>
    </location>
    <ligand>
        <name>Mg(2+)</name>
        <dbReference type="ChEBI" id="CHEBI:18420"/>
        <note>shared with alpha subunit</note>
    </ligand>
</feature>
<feature type="binding site" evidence="1">
    <location>
        <position position="337"/>
    </location>
    <ligand>
        <name>Mg(2+)</name>
        <dbReference type="ChEBI" id="CHEBI:18420"/>
        <note>shared with alpha subunit</note>
    </ligand>
</feature>